<name>Y311_TREPA</name>
<dbReference type="EMBL" id="AE000520">
    <property type="protein sequence ID" value="AAC65304.1"/>
    <property type="molecule type" value="Genomic_DNA"/>
</dbReference>
<dbReference type="PIR" id="A71340">
    <property type="entry name" value="A71340"/>
</dbReference>
<dbReference type="EnsemblBacteria" id="AAC65304">
    <property type="protein sequence ID" value="AAC65304"/>
    <property type="gene ID" value="TP_0311"/>
</dbReference>
<dbReference type="KEGG" id="tpa:TP_0311"/>
<dbReference type="HOGENOM" id="CLU_3174440_0_0_12"/>
<dbReference type="Proteomes" id="UP000000811">
    <property type="component" value="Chromosome"/>
</dbReference>
<protein>
    <recommendedName>
        <fullName>Uncharacterized protein TP_0311</fullName>
    </recommendedName>
</protein>
<gene>
    <name type="ordered locus">TP_0311</name>
</gene>
<reference key="1">
    <citation type="journal article" date="1998" name="Science">
        <title>Complete genome sequence of Treponema pallidum, the syphilis spirochete.</title>
        <authorList>
            <person name="Fraser C.M."/>
            <person name="Norris S.J."/>
            <person name="Weinstock G.M."/>
            <person name="White O."/>
            <person name="Sutton G.G."/>
            <person name="Dodson R.J."/>
            <person name="Gwinn M.L."/>
            <person name="Hickey E.K."/>
            <person name="Clayton R.A."/>
            <person name="Ketchum K.A."/>
            <person name="Sodergren E."/>
            <person name="Hardham J.M."/>
            <person name="McLeod M.P."/>
            <person name="Salzberg S.L."/>
            <person name="Peterson J.D."/>
            <person name="Khalak H.G."/>
            <person name="Richardson D.L."/>
            <person name="Howell J.K."/>
            <person name="Chidambaram M."/>
            <person name="Utterback T.R."/>
            <person name="McDonald L.A."/>
            <person name="Artiach P."/>
            <person name="Bowman C."/>
            <person name="Cotton M.D."/>
            <person name="Fujii C."/>
            <person name="Garland S.A."/>
            <person name="Hatch B."/>
            <person name="Horst K."/>
            <person name="Roberts K.M."/>
            <person name="Sandusky M."/>
            <person name="Weidman J.F."/>
            <person name="Smith H.O."/>
            <person name="Venter J.C."/>
        </authorList>
    </citation>
    <scope>NUCLEOTIDE SEQUENCE [LARGE SCALE GENOMIC DNA]</scope>
    <source>
        <strain>Nichols</strain>
    </source>
</reference>
<sequence>MTGELMLRLPCWSSFCEKTHPPLHPGTSLSSTASIACATHPHHTKGV</sequence>
<accession>O83333</accession>
<keyword id="KW-1185">Reference proteome</keyword>
<organism>
    <name type="scientific">Treponema pallidum (strain Nichols)</name>
    <dbReference type="NCBI Taxonomy" id="243276"/>
    <lineage>
        <taxon>Bacteria</taxon>
        <taxon>Pseudomonadati</taxon>
        <taxon>Spirochaetota</taxon>
        <taxon>Spirochaetia</taxon>
        <taxon>Spirochaetales</taxon>
        <taxon>Treponemataceae</taxon>
        <taxon>Treponema</taxon>
    </lineage>
</organism>
<feature type="chain" id="PRO_0000202231" description="Uncharacterized protein TP_0311">
    <location>
        <begin position="1"/>
        <end position="47"/>
    </location>
</feature>
<proteinExistence type="predicted"/>